<name>SEC11_PLAF7</name>
<organism evidence="12">
    <name type="scientific">Plasmodium falciparum (isolate 3D7)</name>
    <dbReference type="NCBI Taxonomy" id="36329"/>
    <lineage>
        <taxon>Eukaryota</taxon>
        <taxon>Sar</taxon>
        <taxon>Alveolata</taxon>
        <taxon>Apicomplexa</taxon>
        <taxon>Aconoidasida</taxon>
        <taxon>Haemosporida</taxon>
        <taxon>Plasmodiidae</taxon>
        <taxon>Plasmodium</taxon>
        <taxon>Plasmodium (Laverania)</taxon>
    </lineage>
</organism>
<feature type="chain" id="PRO_0000453952" description="Signal peptidase complex catalytic subunit SEC11">
    <location>
        <begin position="1"/>
        <end position="184"/>
    </location>
</feature>
<feature type="topological domain" description="Cytoplasmic" evidence="1">
    <location>
        <begin position="1"/>
        <end position="28"/>
    </location>
</feature>
<feature type="transmembrane region" description="Helical; Signal-anchor for type II membrane protein" evidence="3">
    <location>
        <begin position="29"/>
        <end position="49"/>
    </location>
</feature>
<feature type="topological domain" description="Lumenal" evidence="1">
    <location>
        <begin position="50"/>
        <end position="184"/>
    </location>
</feature>
<feature type="region of interest" description="C-terminal short (CTS) helix" evidence="2">
    <location>
        <begin position="170"/>
        <end position="181"/>
    </location>
</feature>
<feature type="active site" description="Charge relay system" evidence="2">
    <location>
        <position position="63"/>
    </location>
</feature>
<feature type="active site" description="Charge relay system" evidence="2">
    <location>
        <position position="101"/>
    </location>
</feature>
<feature type="active site" description="Charge relay system" evidence="2">
    <location>
        <position position="127"/>
    </location>
</feature>
<feature type="sequence conflict" description="In Ref. 1; ABB91446." evidence="8" ref="1">
    <original>K</original>
    <variation>E</variation>
    <location>
        <position position="81"/>
    </location>
</feature>
<feature type="sequence conflict" description="In Ref. 1; ABB91447." evidence="8" ref="1">
    <original>D</original>
    <variation>N</variation>
    <location>
        <position position="86"/>
    </location>
</feature>
<feature type="sequence conflict" description="In Ref. 1; ABB91447." evidence="8" ref="1">
    <original>I</original>
    <variation>M</variation>
    <location>
        <position position="103"/>
    </location>
</feature>
<sequence length="184" mass="21125">MDFIKEQYNSLVLDLRKTFRNKRDGLSHILNVICLLLNALMIWKLLVVFTGCESPVVVVLSGSMEPGYYRGDTLALYHPPKIHAGDVVVYQINGRDIPIVHRILSLHTSKDNKFHLLSKGDNNNIDDRGLYDPHQYWLENEHVLGLSVGYTPYIGILTIWINEYPVVKWAIVSIMLIMILMGYE</sequence>
<comment type="function">
    <text evidence="2 4 5">Catalytic component of the signal peptidase complex (SPC) which catalyzes the cleavage of N-terminal signal sequences from nascent proteins as they are translocated into the lumen of the endoplasmic reticulum (PubMed:18054093, PubMed:30127496). Specifically cleaves N-terminal signal peptides that contain a hydrophobic alpha-helix (h-region) shorter than 18-20 amino acids (By similarity).</text>
</comment>
<comment type="catalytic activity">
    <reaction evidence="4">
        <text>Cleavage of hydrophobic, N-terminal signal or leader sequences from secreted and periplasmic proteins.</text>
        <dbReference type="EC" id="3.4.21.89"/>
    </reaction>
</comment>
<comment type="activity regulation">
    <text evidence="4">Phosphorylation increases catalytic activity (PubMed:18054093). Ca(2+) slightly increases catalytic activity in vitro (PubMed:18054093).</text>
</comment>
<comment type="subunit">
    <text evidence="2 5">Component of the signal peptidase complex (SPC) composed of a catalytic subunit SEC11/SPC21 and three accessory subunits SPC25, SPC3/SPC22, SPC1/SPC12 (PubMed:30127496). Within the complex, interacts with SPC25 (PubMed:30127496). The complex induces a local thinning of the ER membrane which is used to measure the length of the signal peptide (SP) h-region of protein substrates (By similarity). This ensures the selectivity of the complex towards h-regions shorter than 18-20 amino acids (By similarity). The complex interacts with the SEC61 channel-forming translocon complex and is involved in the import of classical signal sequence-containing proteins (PubMed:30127496).</text>
</comment>
<comment type="subcellular location">
    <subcellularLocation>
        <location evidence="4 5">Endoplasmic reticulum membrane</location>
        <topology evidence="1">Single-pass type II membrane protein</topology>
    </subcellularLocation>
    <text evidence="5">Partially colocalizes with SPC25 in the endoplasmic reticulum.</text>
</comment>
<comment type="developmental stage">
    <text evidence="4 5">Expressed during the asexual blood stage, including ring, trophozoite and schizont stages (at protein level).</text>
</comment>
<comment type="domain">
    <text evidence="2">The C-terminal short (CTS) helix is essential for catalytic activity (By similarity). It may be accommodated as a transmembrane helix in the thinned membrane environment of the complex, similarly to the signal peptide in the complex substrates (By similarity).</text>
</comment>
<comment type="PTM">
    <text evidence="4">Phosphorylated (PubMed:18054093). Phosphorylation increases catalytic activity (PubMed:18054093).</text>
</comment>
<comment type="disruption phenotype">
    <text evidence="4 5">Causes a reduction in parasite growth in the host erythrocyte (PubMed:18054093, PubMed:30127496). Reduces levels of the mature form of SERA5 but not of PEXEL-containing proteins (PubMed:30127496).</text>
</comment>
<comment type="similarity">
    <text evidence="8">Belongs to the peptidase S26B family.</text>
</comment>
<proteinExistence type="evidence at protein level"/>
<reference evidence="9 10" key="1">
    <citation type="journal article" date="2008" name="Mol. Biochem. Parasitol.">
        <title>Plasmodium falciparum signal peptidase is regulated by phosphorylation and required for intra-erythrocytic growth.</title>
        <authorList>
            <person name="Tuteja R."/>
            <person name="Pradhan A."/>
            <person name="Sharma S."/>
        </authorList>
    </citation>
    <scope>NUCLEOTIDE SEQUENCE [GENOMIC DNA / MRNA]</scope>
    <scope>FUNCTION</scope>
    <scope>CATALYTIC ACTIVITY</scope>
    <scope>ACTIVITY REGULATION</scope>
    <scope>SUBCELLULAR LOCATION</scope>
    <scope>DEVELOPMENTAL STAGE</scope>
    <scope>DISRUPTION PHENOTYPE</scope>
    <scope>PHOSPHORYLATION</scope>
</reference>
<reference evidence="12" key="2">
    <citation type="journal article" date="2002" name="Nature">
        <title>Genome sequence of the human malaria parasite Plasmodium falciparum.</title>
        <authorList>
            <person name="Gardner M.J."/>
            <person name="Hall N."/>
            <person name="Fung E."/>
            <person name="White O."/>
            <person name="Berriman M."/>
            <person name="Hyman R.W."/>
            <person name="Carlton J.M."/>
            <person name="Pain A."/>
            <person name="Nelson K.E."/>
            <person name="Bowman S."/>
            <person name="Paulsen I.T."/>
            <person name="James K.D."/>
            <person name="Eisen J.A."/>
            <person name="Rutherford K.M."/>
            <person name="Salzberg S.L."/>
            <person name="Craig A."/>
            <person name="Kyes S."/>
            <person name="Chan M.-S."/>
            <person name="Nene V."/>
            <person name="Shallom S.J."/>
            <person name="Suh B."/>
            <person name="Peterson J."/>
            <person name="Angiuoli S."/>
            <person name="Pertea M."/>
            <person name="Allen J."/>
            <person name="Selengut J."/>
            <person name="Haft D."/>
            <person name="Mather M.W."/>
            <person name="Vaidya A.B."/>
            <person name="Martin D.M.A."/>
            <person name="Fairlamb A.H."/>
            <person name="Fraunholz M.J."/>
            <person name="Roos D.S."/>
            <person name="Ralph S.A."/>
            <person name="McFadden G.I."/>
            <person name="Cummings L.M."/>
            <person name="Subramanian G.M."/>
            <person name="Mungall C."/>
            <person name="Venter J.C."/>
            <person name="Carucci D.J."/>
            <person name="Hoffman S.L."/>
            <person name="Newbold C."/>
            <person name="Davis R.W."/>
            <person name="Fraser C.M."/>
            <person name="Barrell B.G."/>
        </authorList>
    </citation>
    <scope>NUCLEOTIDE SEQUENCE [LARGE SCALE GENOMIC DNA]</scope>
    <source>
        <strain evidence="12">3D7</strain>
    </source>
</reference>
<reference evidence="12" key="3">
    <citation type="journal article" date="2002" name="Nature">
        <title>Sequence of Plasmodium falciparum chromosomes 1, 3-9 and 13.</title>
        <authorList>
            <person name="Hall N."/>
            <person name="Pain A."/>
            <person name="Berriman M."/>
            <person name="Churcher C.M."/>
            <person name="Harris B."/>
            <person name="Harris D."/>
            <person name="Mungall K.L."/>
            <person name="Bowman S."/>
            <person name="Atkin R."/>
            <person name="Baker S."/>
            <person name="Barron A."/>
            <person name="Brooks K."/>
            <person name="Buckee C.O."/>
            <person name="Burrows C."/>
            <person name="Cherevach I."/>
            <person name="Chillingworth C."/>
            <person name="Chillingworth T."/>
            <person name="Christodoulou Z."/>
            <person name="Clark L."/>
            <person name="Clark R."/>
            <person name="Corton C."/>
            <person name="Cronin A."/>
            <person name="Davies R.M."/>
            <person name="Davis P."/>
            <person name="Dear P."/>
            <person name="Dearden F."/>
            <person name="Doggett J."/>
            <person name="Feltwell T."/>
            <person name="Goble A."/>
            <person name="Goodhead I."/>
            <person name="Gwilliam R."/>
            <person name="Hamlin N."/>
            <person name="Hance Z."/>
            <person name="Harper D."/>
            <person name="Hauser H."/>
            <person name="Hornsby T."/>
            <person name="Holroyd S."/>
            <person name="Horrocks P."/>
            <person name="Humphray S."/>
            <person name="Jagels K."/>
            <person name="James K.D."/>
            <person name="Johnson D."/>
            <person name="Kerhornou A."/>
            <person name="Knights A."/>
            <person name="Konfortov B."/>
            <person name="Kyes S."/>
            <person name="Larke N."/>
            <person name="Lawson D."/>
            <person name="Lennard N."/>
            <person name="Line A."/>
            <person name="Maddison M."/>
            <person name="Mclean J."/>
            <person name="Mooney P."/>
            <person name="Moule S."/>
            <person name="Murphy L."/>
            <person name="Oliver K."/>
            <person name="Ormond D."/>
            <person name="Price C."/>
            <person name="Quail M.A."/>
            <person name="Rabbinowitsch E."/>
            <person name="Rajandream M.A."/>
            <person name="Rutter S."/>
            <person name="Rutherford K.M."/>
            <person name="Sanders M."/>
            <person name="Simmonds M."/>
            <person name="Seeger K."/>
            <person name="Sharp S."/>
            <person name="Smith R."/>
            <person name="Squares R."/>
            <person name="Squares S."/>
            <person name="Stevens K."/>
            <person name="Taylor K."/>
            <person name="Tivey A."/>
            <person name="Unwin L."/>
            <person name="Whitehead S."/>
            <person name="Woodward J.R."/>
            <person name="Sulston J.E."/>
            <person name="Craig A."/>
            <person name="Newbold C."/>
            <person name="Barrell B.G."/>
        </authorList>
    </citation>
    <scope>NUCLEOTIDE SEQUENCE [LARGE SCALE GENOMIC DNA]</scope>
    <source>
        <strain evidence="12">3D7</strain>
    </source>
</reference>
<reference evidence="8" key="4">
    <citation type="journal article" date="2018" name="Nat. Microbiol.">
        <title>Plasmepsin V cleaves malaria effector proteins in a distinct endoplasmic reticulum translocation interactome for export to the erythrocyte.</title>
        <authorList>
            <person name="Marapana D.S."/>
            <person name="Dagley L.F."/>
            <person name="Sandow J.J."/>
            <person name="Nebl T."/>
            <person name="Triglia T."/>
            <person name="Pasternak M."/>
            <person name="Dickerman B.K."/>
            <person name="Crabb B.S."/>
            <person name="Gilson P.R."/>
            <person name="Webb A.I."/>
            <person name="Boddey J.A."/>
            <person name="Cowman A.F."/>
        </authorList>
    </citation>
    <scope>FUNCTION</scope>
    <scope>IDENTIFICATION IN THE SIGNAL PEPTIDASE COMPLEX</scope>
    <scope>INTERACTION WITH SPC25</scope>
    <scope>SUBCELLULAR LOCATION</scope>
    <scope>DEVELOPMENTAL STAGE</scope>
    <scope>DISRUPTION PHENOTYPE</scope>
</reference>
<protein>
    <recommendedName>
        <fullName evidence="8">Signal peptidase complex catalytic subunit SEC11</fullName>
        <shortName evidence="7">PfSPC21</shortName>
        <ecNumber evidence="4">3.4.21.89</ecNumber>
    </recommendedName>
    <alternativeName>
        <fullName evidence="6">Signal peptidase 21 kDa</fullName>
        <shortName evidence="6">PfSP21</shortName>
    </alternativeName>
</protein>
<gene>
    <name evidence="8" type="primary">SEC11</name>
    <name evidence="7" type="synonym">SPC21</name>
    <name evidence="11" type="ORF">PF3D7_1331300</name>
</gene>
<accession>Q8IE14</accession>
<accession>Q2V8J6</accession>
<accession>Q2V8J7</accession>
<keyword id="KW-0256">Endoplasmic reticulum</keyword>
<keyword id="KW-0378">Hydrolase</keyword>
<keyword id="KW-0472">Membrane</keyword>
<keyword id="KW-0597">Phosphoprotein</keyword>
<keyword id="KW-0645">Protease</keyword>
<keyword id="KW-1185">Reference proteome</keyword>
<keyword id="KW-0735">Signal-anchor</keyword>
<keyword id="KW-0812">Transmembrane</keyword>
<keyword id="KW-1133">Transmembrane helix</keyword>
<dbReference type="EC" id="3.4.21.89" evidence="4"/>
<dbReference type="EMBL" id="DQ286434">
    <property type="protein sequence ID" value="ABB91446.1"/>
    <property type="molecule type" value="mRNA"/>
</dbReference>
<dbReference type="EMBL" id="DQ286435">
    <property type="protein sequence ID" value="ABB91447.1"/>
    <property type="molecule type" value="Genomic_DNA"/>
</dbReference>
<dbReference type="EMBL" id="AL844509">
    <property type="protein sequence ID" value="CAD52453.1"/>
    <property type="molecule type" value="Genomic_DNA"/>
</dbReference>
<dbReference type="RefSeq" id="XP_001350045.1">
    <property type="nucleotide sequence ID" value="XM_001350009.1"/>
</dbReference>
<dbReference type="SMR" id="Q8IE14"/>
<dbReference type="FunCoup" id="Q8IE14">
    <property type="interactions" value="405"/>
</dbReference>
<dbReference type="STRING" id="36329.Q8IE14"/>
<dbReference type="MEROPS" id="S26.010"/>
<dbReference type="SwissPalm" id="Q8IE14"/>
<dbReference type="PaxDb" id="5833-MAL13P1.167"/>
<dbReference type="EnsemblProtists" id="CAD52453">
    <property type="protein sequence ID" value="CAD52453"/>
    <property type="gene ID" value="PF3D7_1331300"/>
</dbReference>
<dbReference type="GeneID" id="813720"/>
<dbReference type="KEGG" id="pfa:PF3D7_1331300"/>
<dbReference type="VEuPathDB" id="PlasmoDB:PF3D7_1331300"/>
<dbReference type="VEuPathDB" id="PlasmoDB:Pf7G8-2_000434300"/>
<dbReference type="VEuPathDB" id="PlasmoDB:Pf7G8_130035800"/>
<dbReference type="VEuPathDB" id="PlasmoDB:PfCD01_130036900"/>
<dbReference type="VEuPathDB" id="PlasmoDB:PfDd2_130037200"/>
<dbReference type="VEuPathDB" id="PlasmoDB:PfGA01_130037500"/>
<dbReference type="VEuPathDB" id="PlasmoDB:PfGB4_130037300"/>
<dbReference type="VEuPathDB" id="PlasmoDB:PfGN01_130038100"/>
<dbReference type="VEuPathDB" id="PlasmoDB:PfHB3_130037700"/>
<dbReference type="VEuPathDB" id="PlasmoDB:PfIT_130036600"/>
<dbReference type="VEuPathDB" id="PlasmoDB:PfKE01_130037000"/>
<dbReference type="VEuPathDB" id="PlasmoDB:PfKH01_130035600"/>
<dbReference type="VEuPathDB" id="PlasmoDB:PfKH02_130034300"/>
<dbReference type="VEuPathDB" id="PlasmoDB:PfML01_130035200"/>
<dbReference type="VEuPathDB" id="PlasmoDB:PfNF135_130036100"/>
<dbReference type="VEuPathDB" id="PlasmoDB:PfNF166_130036800"/>
<dbReference type="VEuPathDB" id="PlasmoDB:PfNF54_130036500"/>
<dbReference type="VEuPathDB" id="PlasmoDB:PfSD01_130038100"/>
<dbReference type="VEuPathDB" id="PlasmoDB:PfSN01_130034400"/>
<dbReference type="VEuPathDB" id="PlasmoDB:PfTG01_130037100"/>
<dbReference type="HOGENOM" id="CLU_089996_0_0_1"/>
<dbReference type="InParanoid" id="Q8IE14"/>
<dbReference type="OMA" id="GSMEPFM"/>
<dbReference type="OrthoDB" id="10257561at2759"/>
<dbReference type="PhylomeDB" id="Q8IE14"/>
<dbReference type="Proteomes" id="UP000001450">
    <property type="component" value="Chromosome 13"/>
</dbReference>
<dbReference type="GO" id="GO:0005783">
    <property type="term" value="C:endoplasmic reticulum"/>
    <property type="evidence" value="ECO:0000314"/>
    <property type="project" value="GeneDB"/>
</dbReference>
<dbReference type="GO" id="GO:0005787">
    <property type="term" value="C:signal peptidase complex"/>
    <property type="evidence" value="ECO:0000250"/>
    <property type="project" value="GeneDB"/>
</dbReference>
<dbReference type="GO" id="GO:0008233">
    <property type="term" value="F:peptidase activity"/>
    <property type="evidence" value="ECO:0000250"/>
    <property type="project" value="GeneDB"/>
</dbReference>
<dbReference type="GO" id="GO:0004252">
    <property type="term" value="F:serine-type endopeptidase activity"/>
    <property type="evidence" value="ECO:0007669"/>
    <property type="project" value="UniProtKB-EC"/>
</dbReference>
<dbReference type="GO" id="GO:0006465">
    <property type="term" value="P:signal peptide processing"/>
    <property type="evidence" value="ECO:0000250"/>
    <property type="project" value="GeneDB"/>
</dbReference>
<dbReference type="CDD" id="cd06530">
    <property type="entry name" value="S26_SPase_I"/>
    <property type="match status" value="1"/>
</dbReference>
<dbReference type="InterPro" id="IPR036286">
    <property type="entry name" value="LexA/Signal_pep-like_sf"/>
</dbReference>
<dbReference type="InterPro" id="IPR019758">
    <property type="entry name" value="Pept_S26A_signal_pept_1_CS"/>
</dbReference>
<dbReference type="InterPro" id="IPR015927">
    <property type="entry name" value="Peptidase_S24_S26A/B/C"/>
</dbReference>
<dbReference type="InterPro" id="IPR019533">
    <property type="entry name" value="Peptidase_S26"/>
</dbReference>
<dbReference type="InterPro" id="IPR001733">
    <property type="entry name" value="Peptidase_S26B"/>
</dbReference>
<dbReference type="NCBIfam" id="TIGR02228">
    <property type="entry name" value="sigpep_I_arch"/>
    <property type="match status" value="1"/>
</dbReference>
<dbReference type="PANTHER" id="PTHR10806">
    <property type="entry name" value="SIGNAL PEPTIDASE COMPLEX CATALYTIC SUBUNIT SEC11"/>
    <property type="match status" value="1"/>
</dbReference>
<dbReference type="PANTHER" id="PTHR10806:SF6">
    <property type="entry name" value="SIGNAL PEPTIDASE COMPLEX CATALYTIC SUBUNIT SEC11"/>
    <property type="match status" value="1"/>
</dbReference>
<dbReference type="Pfam" id="PF00717">
    <property type="entry name" value="Peptidase_S24"/>
    <property type="match status" value="1"/>
</dbReference>
<dbReference type="PRINTS" id="PR00728">
    <property type="entry name" value="SIGNALPTASE"/>
</dbReference>
<dbReference type="SUPFAM" id="SSF51306">
    <property type="entry name" value="LexA/Signal peptidase"/>
    <property type="match status" value="1"/>
</dbReference>
<dbReference type="PROSITE" id="PS00761">
    <property type="entry name" value="SPASE_I_3"/>
    <property type="match status" value="1"/>
</dbReference>
<evidence type="ECO:0000250" key="1">
    <source>
        <dbReference type="UniProtKB" id="P13679"/>
    </source>
</evidence>
<evidence type="ECO:0000250" key="2">
    <source>
        <dbReference type="UniProtKB" id="P67812"/>
    </source>
</evidence>
<evidence type="ECO:0000255" key="3"/>
<evidence type="ECO:0000269" key="4">
    <source>
    </source>
</evidence>
<evidence type="ECO:0000269" key="5">
    <source>
    </source>
</evidence>
<evidence type="ECO:0000303" key="6">
    <source>
    </source>
</evidence>
<evidence type="ECO:0000303" key="7">
    <source>
    </source>
</evidence>
<evidence type="ECO:0000305" key="8"/>
<evidence type="ECO:0000312" key="9">
    <source>
        <dbReference type="EMBL" id="ABB91446.1"/>
    </source>
</evidence>
<evidence type="ECO:0000312" key="10">
    <source>
        <dbReference type="EMBL" id="ABB91447.1"/>
    </source>
</evidence>
<evidence type="ECO:0000312" key="11">
    <source>
        <dbReference type="EMBL" id="CAD52453.1"/>
    </source>
</evidence>
<evidence type="ECO:0000312" key="12">
    <source>
        <dbReference type="Proteomes" id="UP000001450"/>
    </source>
</evidence>